<dbReference type="EC" id="4.1.99.17" evidence="1"/>
<dbReference type="EMBL" id="AE013598">
    <property type="protein sequence ID" value="AAW74201.1"/>
    <property type="status" value="ALT_FRAME"/>
    <property type="molecule type" value="Genomic_DNA"/>
</dbReference>
<dbReference type="SMR" id="Q5H4C0"/>
<dbReference type="STRING" id="291331.XOO0947"/>
<dbReference type="KEGG" id="xoo:XOO0947"/>
<dbReference type="HOGENOM" id="CLU_013181_2_1_6"/>
<dbReference type="UniPathway" id="UPA00060"/>
<dbReference type="Proteomes" id="UP000006735">
    <property type="component" value="Chromosome"/>
</dbReference>
<dbReference type="GO" id="GO:0005829">
    <property type="term" value="C:cytosol"/>
    <property type="evidence" value="ECO:0007669"/>
    <property type="project" value="TreeGrafter"/>
</dbReference>
<dbReference type="GO" id="GO:0051539">
    <property type="term" value="F:4 iron, 4 sulfur cluster binding"/>
    <property type="evidence" value="ECO:0007669"/>
    <property type="project" value="UniProtKB-KW"/>
</dbReference>
<dbReference type="GO" id="GO:0016830">
    <property type="term" value="F:carbon-carbon lyase activity"/>
    <property type="evidence" value="ECO:0007669"/>
    <property type="project" value="InterPro"/>
</dbReference>
<dbReference type="GO" id="GO:0008270">
    <property type="term" value="F:zinc ion binding"/>
    <property type="evidence" value="ECO:0007669"/>
    <property type="project" value="UniProtKB-UniRule"/>
</dbReference>
<dbReference type="GO" id="GO:0009228">
    <property type="term" value="P:thiamine biosynthetic process"/>
    <property type="evidence" value="ECO:0007669"/>
    <property type="project" value="UniProtKB-KW"/>
</dbReference>
<dbReference type="GO" id="GO:0009229">
    <property type="term" value="P:thiamine diphosphate biosynthetic process"/>
    <property type="evidence" value="ECO:0007669"/>
    <property type="project" value="UniProtKB-UniRule"/>
</dbReference>
<dbReference type="FunFam" id="3.20.20.540:FF:000001">
    <property type="entry name" value="Phosphomethylpyrimidine synthase"/>
    <property type="match status" value="1"/>
</dbReference>
<dbReference type="Gene3D" id="6.10.250.620">
    <property type="match status" value="1"/>
</dbReference>
<dbReference type="Gene3D" id="3.20.20.540">
    <property type="entry name" value="Radical SAM ThiC family, central domain"/>
    <property type="match status" value="1"/>
</dbReference>
<dbReference type="HAMAP" id="MF_00089">
    <property type="entry name" value="ThiC"/>
    <property type="match status" value="1"/>
</dbReference>
<dbReference type="InterPro" id="IPR037509">
    <property type="entry name" value="ThiC"/>
</dbReference>
<dbReference type="InterPro" id="IPR025747">
    <property type="entry name" value="ThiC-associated_dom"/>
</dbReference>
<dbReference type="InterPro" id="IPR038521">
    <property type="entry name" value="ThiC/Bza_core_dom"/>
</dbReference>
<dbReference type="InterPro" id="IPR002817">
    <property type="entry name" value="ThiC/BzaA/B"/>
</dbReference>
<dbReference type="NCBIfam" id="NF006763">
    <property type="entry name" value="PRK09284.1"/>
    <property type="match status" value="1"/>
</dbReference>
<dbReference type="NCBIfam" id="NF009895">
    <property type="entry name" value="PRK13352.1"/>
    <property type="match status" value="1"/>
</dbReference>
<dbReference type="NCBIfam" id="TIGR00190">
    <property type="entry name" value="thiC"/>
    <property type="match status" value="1"/>
</dbReference>
<dbReference type="PANTHER" id="PTHR30557:SF1">
    <property type="entry name" value="PHOSPHOMETHYLPYRIMIDINE SYNTHASE, CHLOROPLASTIC"/>
    <property type="match status" value="1"/>
</dbReference>
<dbReference type="PANTHER" id="PTHR30557">
    <property type="entry name" value="THIAMINE BIOSYNTHESIS PROTEIN THIC"/>
    <property type="match status" value="1"/>
</dbReference>
<dbReference type="Pfam" id="PF13667">
    <property type="entry name" value="ThiC-associated"/>
    <property type="match status" value="1"/>
</dbReference>
<dbReference type="Pfam" id="PF01964">
    <property type="entry name" value="ThiC_Rad_SAM"/>
    <property type="match status" value="1"/>
</dbReference>
<dbReference type="SFLD" id="SFLDF00407">
    <property type="entry name" value="phosphomethylpyrimidine_syntha"/>
    <property type="match status" value="1"/>
</dbReference>
<dbReference type="SFLD" id="SFLDG01114">
    <property type="entry name" value="phosphomethylpyrimidine_syntha"/>
    <property type="match status" value="1"/>
</dbReference>
<dbReference type="SFLD" id="SFLDS00113">
    <property type="entry name" value="Radical_SAM_Phosphomethylpyrim"/>
    <property type="match status" value="1"/>
</dbReference>
<sequence length="625" mass="69227">MNAAPTVLQQQAQSLSEAVTQPIPGSRKIFVQGSRADLQVPMREIALTRTPTLFGGEENPPLSVYDTSGPYTDPQVAIDLAVGLAPLRAHWIAERGDTVALDGLSSSFGRGREHDARLDAVRFPARRLPRVAREGANVTQMHYARRGIITPEMEYVAIRENQRLEAVTDASLRKQHPGEAFGASIQQRITPEFVREEIARGRAILPNNINHPESEPMIIGRNFLTKINANIGNSAVSSGIAEEVEKLVWSIRWGGDTVMDLSTGKHIHETREWIIRNSPVPIGTVPIYQALEKVDGRAEALTWEIFRDTLIEQAEQGVDYFTIHAGVLLRYVPLTAKRVTGIVSRGGSIMAKWCLAHHKENFLYTHFEDICQIMKAYDVAFSLGDGLRPGCIADANDAAQFGELETLGELTKLAWKHDVQTMIEGPGHVPMQLIKENMDKQLRECGEAPFYTLGPLTTDIAPGYDHITSAIGAAMIGWFGTAMLCYVTPKEHLGLPNRQDVRDGIMAYKIAAHAADLAKGHPGAQVRDNALSKARFEFRWDDQFHLGLDPEKAKEFHDETLPKDAHKLAHFCSMCGPHFCSMKITQDVRDYAAEHGMDDAQALSTGMQEKSAQFLAQGAQVYRPM</sequence>
<reference key="1">
    <citation type="journal article" date="2005" name="Nucleic Acids Res.">
        <title>The genome sequence of Xanthomonas oryzae pathovar oryzae KACC10331, the bacterial blight pathogen of rice.</title>
        <authorList>
            <person name="Lee B.-M."/>
            <person name="Park Y.-J."/>
            <person name="Park D.-S."/>
            <person name="Kang H.-W."/>
            <person name="Kim J.-G."/>
            <person name="Song E.-S."/>
            <person name="Park I.-C."/>
            <person name="Yoon U.-H."/>
            <person name="Hahn J.-H."/>
            <person name="Koo B.-S."/>
            <person name="Lee G.-B."/>
            <person name="Kim H."/>
            <person name="Park H.-S."/>
            <person name="Yoon K.-O."/>
            <person name="Kim J.-H."/>
            <person name="Jung C.-H."/>
            <person name="Koh N.-H."/>
            <person name="Seo J.-S."/>
            <person name="Go S.-J."/>
        </authorList>
    </citation>
    <scope>NUCLEOTIDE SEQUENCE [LARGE SCALE GENOMIC DNA]</scope>
    <source>
        <strain>KACC10331 / KXO85</strain>
    </source>
</reference>
<name>THIC_XANOR</name>
<accession>Q5H4C0</accession>
<evidence type="ECO:0000255" key="1">
    <source>
        <dbReference type="HAMAP-Rule" id="MF_00089"/>
    </source>
</evidence>
<evidence type="ECO:0000305" key="2"/>
<comment type="function">
    <text evidence="1">Catalyzes the synthesis of the hydroxymethylpyrimidine phosphate (HMP-P) moiety of thiamine from aminoimidazole ribotide (AIR) in a radical S-adenosyl-L-methionine (SAM)-dependent reaction.</text>
</comment>
<comment type="catalytic activity">
    <reaction evidence="1">
        <text>5-amino-1-(5-phospho-beta-D-ribosyl)imidazole + S-adenosyl-L-methionine = 4-amino-2-methyl-5-(phosphooxymethyl)pyrimidine + CO + 5'-deoxyadenosine + formate + L-methionine + 3 H(+)</text>
        <dbReference type="Rhea" id="RHEA:24840"/>
        <dbReference type="ChEBI" id="CHEBI:15378"/>
        <dbReference type="ChEBI" id="CHEBI:15740"/>
        <dbReference type="ChEBI" id="CHEBI:17245"/>
        <dbReference type="ChEBI" id="CHEBI:17319"/>
        <dbReference type="ChEBI" id="CHEBI:57844"/>
        <dbReference type="ChEBI" id="CHEBI:58354"/>
        <dbReference type="ChEBI" id="CHEBI:59789"/>
        <dbReference type="ChEBI" id="CHEBI:137981"/>
        <dbReference type="EC" id="4.1.99.17"/>
    </reaction>
</comment>
<comment type="cofactor">
    <cofactor evidence="1">
        <name>[4Fe-4S] cluster</name>
        <dbReference type="ChEBI" id="CHEBI:49883"/>
    </cofactor>
    <text evidence="1">Binds 1 [4Fe-4S] cluster per subunit. The cluster is coordinated with 3 cysteines and an exchangeable S-adenosyl-L-methionine.</text>
</comment>
<comment type="pathway">
    <text evidence="1">Cofactor biosynthesis; thiamine diphosphate biosynthesis.</text>
</comment>
<comment type="subunit">
    <text evidence="1">Homodimer.</text>
</comment>
<comment type="similarity">
    <text evidence="1">Belongs to the ThiC family.</text>
</comment>
<comment type="sequence caution" evidence="2">
    <conflict type="frameshift">
        <sequence resource="EMBL-CDS" id="AAW74201"/>
    </conflict>
</comment>
<protein>
    <recommendedName>
        <fullName evidence="1">Phosphomethylpyrimidine synthase</fullName>
        <ecNumber evidence="1">4.1.99.17</ecNumber>
    </recommendedName>
    <alternativeName>
        <fullName evidence="1">Hydroxymethylpyrimidine phosphate synthase</fullName>
        <shortName evidence="1">HMP-P synthase</shortName>
        <shortName evidence="1">HMP-phosphate synthase</shortName>
        <shortName evidence="1">HMPP synthase</shortName>
    </alternativeName>
    <alternativeName>
        <fullName evidence="1">Thiamine biosynthesis protein ThiC</fullName>
    </alternativeName>
</protein>
<keyword id="KW-0004">4Fe-4S</keyword>
<keyword id="KW-0408">Iron</keyword>
<keyword id="KW-0411">Iron-sulfur</keyword>
<keyword id="KW-0456">Lyase</keyword>
<keyword id="KW-0479">Metal-binding</keyword>
<keyword id="KW-1185">Reference proteome</keyword>
<keyword id="KW-0949">S-adenosyl-L-methionine</keyword>
<keyword id="KW-0784">Thiamine biosynthesis</keyword>
<keyword id="KW-0862">Zinc</keyword>
<gene>
    <name evidence="1" type="primary">thiC</name>
    <name type="ordered locus">XOO0947</name>
</gene>
<organism>
    <name type="scientific">Xanthomonas oryzae pv. oryzae (strain KACC10331 / KXO85)</name>
    <dbReference type="NCBI Taxonomy" id="291331"/>
    <lineage>
        <taxon>Bacteria</taxon>
        <taxon>Pseudomonadati</taxon>
        <taxon>Pseudomonadota</taxon>
        <taxon>Gammaproteobacteria</taxon>
        <taxon>Lysobacterales</taxon>
        <taxon>Lysobacteraceae</taxon>
        <taxon>Xanthomonas</taxon>
    </lineage>
</organism>
<feature type="chain" id="PRO_0000242320" description="Phosphomethylpyrimidine synthase">
    <location>
        <begin position="1"/>
        <end position="625"/>
    </location>
</feature>
<feature type="binding site" evidence="1">
    <location>
        <position position="230"/>
    </location>
    <ligand>
        <name>substrate</name>
    </ligand>
</feature>
<feature type="binding site" evidence="1">
    <location>
        <position position="259"/>
    </location>
    <ligand>
        <name>substrate</name>
    </ligand>
</feature>
<feature type="binding site" evidence="1">
    <location>
        <position position="288"/>
    </location>
    <ligand>
        <name>substrate</name>
    </ligand>
</feature>
<feature type="binding site" evidence="1">
    <location>
        <position position="324"/>
    </location>
    <ligand>
        <name>substrate</name>
    </ligand>
</feature>
<feature type="binding site" evidence="1">
    <location>
        <begin position="344"/>
        <end position="346"/>
    </location>
    <ligand>
        <name>substrate</name>
    </ligand>
</feature>
<feature type="binding site" evidence="1">
    <location>
        <begin position="385"/>
        <end position="388"/>
    </location>
    <ligand>
        <name>substrate</name>
    </ligand>
</feature>
<feature type="binding site" evidence="1">
    <location>
        <position position="424"/>
    </location>
    <ligand>
        <name>substrate</name>
    </ligand>
</feature>
<feature type="binding site" evidence="1">
    <location>
        <position position="428"/>
    </location>
    <ligand>
        <name>Zn(2+)</name>
        <dbReference type="ChEBI" id="CHEBI:29105"/>
    </ligand>
</feature>
<feature type="binding site" evidence="1">
    <location>
        <position position="451"/>
    </location>
    <ligand>
        <name>substrate</name>
    </ligand>
</feature>
<feature type="binding site" evidence="1">
    <location>
        <position position="492"/>
    </location>
    <ligand>
        <name>Zn(2+)</name>
        <dbReference type="ChEBI" id="CHEBI:29105"/>
    </ligand>
</feature>
<feature type="binding site" evidence="1">
    <location>
        <position position="572"/>
    </location>
    <ligand>
        <name>[4Fe-4S] cluster</name>
        <dbReference type="ChEBI" id="CHEBI:49883"/>
        <note>4Fe-4S-S-AdoMet</note>
    </ligand>
</feature>
<feature type="binding site" evidence="1">
    <location>
        <position position="575"/>
    </location>
    <ligand>
        <name>[4Fe-4S] cluster</name>
        <dbReference type="ChEBI" id="CHEBI:49883"/>
        <note>4Fe-4S-S-AdoMet</note>
    </ligand>
</feature>
<feature type="binding site" evidence="1">
    <location>
        <position position="580"/>
    </location>
    <ligand>
        <name>[4Fe-4S] cluster</name>
        <dbReference type="ChEBI" id="CHEBI:49883"/>
        <note>4Fe-4S-S-AdoMet</note>
    </ligand>
</feature>
<proteinExistence type="inferred from homology"/>